<organism>
    <name type="scientific">Oryza sativa subsp. japonica</name>
    <name type="common">Rice</name>
    <dbReference type="NCBI Taxonomy" id="39947"/>
    <lineage>
        <taxon>Eukaryota</taxon>
        <taxon>Viridiplantae</taxon>
        <taxon>Streptophyta</taxon>
        <taxon>Embryophyta</taxon>
        <taxon>Tracheophyta</taxon>
        <taxon>Spermatophyta</taxon>
        <taxon>Magnoliopsida</taxon>
        <taxon>Liliopsida</taxon>
        <taxon>Poales</taxon>
        <taxon>Poaceae</taxon>
        <taxon>BOP clade</taxon>
        <taxon>Oryzoideae</taxon>
        <taxon>Oryzeae</taxon>
        <taxon>Oryzinae</taxon>
        <taxon>Oryza</taxon>
        <taxon>Oryza sativa</taxon>
    </lineage>
</organism>
<sequence>MASRFQLILSTFVVIAAVTMLPRPCASIEFHRKLSSWSNGGATWYGAANGAGSDGGACGYQGAVFQAPFSSMIAAGSPSIYKSGLGCGSCYQVKCTGNSACSGNPVTVVLTDECPGGPCLSEPVHFDLSGTAFGAMANPGQADQLRAAGVLQIQYNRVPCNWGGVKLTFVVDVGSNPNYFAVLVKYENGDGDLSGVELMQTGAGAAWTQMQQSWGAVWKLNAGSALQAPFSIRLTSSSGKTLVASNVIPSGWKPGMSYISTVNF</sequence>
<proteinExistence type="inferred from homology"/>
<keyword id="KW-0134">Cell wall</keyword>
<keyword id="KW-0961">Cell wall biogenesis/degradation</keyword>
<keyword id="KW-1015">Disulfide bond</keyword>
<keyword id="KW-0472">Membrane</keyword>
<keyword id="KW-1185">Reference proteome</keyword>
<keyword id="KW-0964">Secreted</keyword>
<keyword id="KW-0732">Signal</keyword>
<reference key="1">
    <citation type="journal article" date="2001" name="Plant Physiol.">
        <title>Expression of beta-expansins is correlated with internodal elongation in deepwater rice.</title>
        <authorList>
            <person name="Lee Y."/>
            <person name="Kende H."/>
        </authorList>
    </citation>
    <scope>NUCLEOTIDE SEQUENCE [GENOMIC DNA]</scope>
</reference>
<reference key="2">
    <citation type="journal article" date="2002" name="Nature">
        <title>Sequence and analysis of rice chromosome 4.</title>
        <authorList>
            <person name="Feng Q."/>
            <person name="Zhang Y."/>
            <person name="Hao P."/>
            <person name="Wang S."/>
            <person name="Fu G."/>
            <person name="Huang Y."/>
            <person name="Li Y."/>
            <person name="Zhu J."/>
            <person name="Liu Y."/>
            <person name="Hu X."/>
            <person name="Jia P."/>
            <person name="Zhang Y."/>
            <person name="Zhao Q."/>
            <person name="Ying K."/>
            <person name="Yu S."/>
            <person name="Tang Y."/>
            <person name="Weng Q."/>
            <person name="Zhang L."/>
            <person name="Lu Y."/>
            <person name="Mu J."/>
            <person name="Lu Y."/>
            <person name="Zhang L.S."/>
            <person name="Yu Z."/>
            <person name="Fan D."/>
            <person name="Liu X."/>
            <person name="Lu T."/>
            <person name="Li C."/>
            <person name="Wu Y."/>
            <person name="Sun T."/>
            <person name="Lei H."/>
            <person name="Li T."/>
            <person name="Hu H."/>
            <person name="Guan J."/>
            <person name="Wu M."/>
            <person name="Zhang R."/>
            <person name="Zhou B."/>
            <person name="Chen Z."/>
            <person name="Chen L."/>
            <person name="Jin Z."/>
            <person name="Wang R."/>
            <person name="Yin H."/>
            <person name="Cai Z."/>
            <person name="Ren S."/>
            <person name="Lv G."/>
            <person name="Gu W."/>
            <person name="Zhu G."/>
            <person name="Tu Y."/>
            <person name="Jia J."/>
            <person name="Zhang Y."/>
            <person name="Chen J."/>
            <person name="Kang H."/>
            <person name="Chen X."/>
            <person name="Shao C."/>
            <person name="Sun Y."/>
            <person name="Hu Q."/>
            <person name="Zhang X."/>
            <person name="Zhang W."/>
            <person name="Wang L."/>
            <person name="Ding C."/>
            <person name="Sheng H."/>
            <person name="Gu J."/>
            <person name="Chen S."/>
            <person name="Ni L."/>
            <person name="Zhu F."/>
            <person name="Chen W."/>
            <person name="Lan L."/>
            <person name="Lai Y."/>
            <person name="Cheng Z."/>
            <person name="Gu M."/>
            <person name="Jiang J."/>
            <person name="Li J."/>
            <person name="Hong G."/>
            <person name="Xue Y."/>
            <person name="Han B."/>
        </authorList>
    </citation>
    <scope>NUCLEOTIDE SEQUENCE [LARGE SCALE GENOMIC DNA]</scope>
    <source>
        <strain>cv. Nipponbare</strain>
    </source>
</reference>
<reference key="3">
    <citation type="journal article" date="2005" name="Nature">
        <title>The map-based sequence of the rice genome.</title>
        <authorList>
            <consortium name="International rice genome sequencing project (IRGSP)"/>
        </authorList>
    </citation>
    <scope>NUCLEOTIDE SEQUENCE [LARGE SCALE GENOMIC DNA]</scope>
    <source>
        <strain>cv. Nipponbare</strain>
    </source>
</reference>
<reference key="4">
    <citation type="journal article" date="2008" name="Nucleic Acids Res.">
        <title>The rice annotation project database (RAP-DB): 2008 update.</title>
        <authorList>
            <consortium name="The rice annotation project (RAP)"/>
        </authorList>
    </citation>
    <scope>GENOME REANNOTATION</scope>
    <source>
        <strain>cv. Nipponbare</strain>
    </source>
</reference>
<reference key="5">
    <citation type="journal article" date="2013" name="Rice">
        <title>Improvement of the Oryza sativa Nipponbare reference genome using next generation sequence and optical map data.</title>
        <authorList>
            <person name="Kawahara Y."/>
            <person name="de la Bastide M."/>
            <person name="Hamilton J.P."/>
            <person name="Kanamori H."/>
            <person name="McCombie W.R."/>
            <person name="Ouyang S."/>
            <person name="Schwartz D.C."/>
            <person name="Tanaka T."/>
            <person name="Wu J."/>
            <person name="Zhou S."/>
            <person name="Childs K.L."/>
            <person name="Davidson R.M."/>
            <person name="Lin H."/>
            <person name="Quesada-Ocampo L."/>
            <person name="Vaillancourt B."/>
            <person name="Sakai H."/>
            <person name="Lee S.S."/>
            <person name="Kim J."/>
            <person name="Numa H."/>
            <person name="Itoh T."/>
            <person name="Buell C.R."/>
            <person name="Matsumoto T."/>
        </authorList>
    </citation>
    <scope>GENOME REANNOTATION</scope>
    <source>
        <strain>cv. Nipponbare</strain>
    </source>
</reference>
<reference key="6">
    <citation type="journal article" date="2005" name="PLoS Biol.">
        <title>The genomes of Oryza sativa: a history of duplications.</title>
        <authorList>
            <person name="Yu J."/>
            <person name="Wang J."/>
            <person name="Lin W."/>
            <person name="Li S."/>
            <person name="Li H."/>
            <person name="Zhou J."/>
            <person name="Ni P."/>
            <person name="Dong W."/>
            <person name="Hu S."/>
            <person name="Zeng C."/>
            <person name="Zhang J."/>
            <person name="Zhang Y."/>
            <person name="Li R."/>
            <person name="Xu Z."/>
            <person name="Li S."/>
            <person name="Li X."/>
            <person name="Zheng H."/>
            <person name="Cong L."/>
            <person name="Lin L."/>
            <person name="Yin J."/>
            <person name="Geng J."/>
            <person name="Li G."/>
            <person name="Shi J."/>
            <person name="Liu J."/>
            <person name="Lv H."/>
            <person name="Li J."/>
            <person name="Wang J."/>
            <person name="Deng Y."/>
            <person name="Ran L."/>
            <person name="Shi X."/>
            <person name="Wang X."/>
            <person name="Wu Q."/>
            <person name="Li C."/>
            <person name="Ren X."/>
            <person name="Wang J."/>
            <person name="Wang X."/>
            <person name="Li D."/>
            <person name="Liu D."/>
            <person name="Zhang X."/>
            <person name="Ji Z."/>
            <person name="Zhao W."/>
            <person name="Sun Y."/>
            <person name="Zhang Z."/>
            <person name="Bao J."/>
            <person name="Han Y."/>
            <person name="Dong L."/>
            <person name="Ji J."/>
            <person name="Chen P."/>
            <person name="Wu S."/>
            <person name="Liu J."/>
            <person name="Xiao Y."/>
            <person name="Bu D."/>
            <person name="Tan J."/>
            <person name="Yang L."/>
            <person name="Ye C."/>
            <person name="Zhang J."/>
            <person name="Xu J."/>
            <person name="Zhou Y."/>
            <person name="Yu Y."/>
            <person name="Zhang B."/>
            <person name="Zhuang S."/>
            <person name="Wei H."/>
            <person name="Liu B."/>
            <person name="Lei M."/>
            <person name="Yu H."/>
            <person name="Li Y."/>
            <person name="Xu H."/>
            <person name="Wei S."/>
            <person name="He X."/>
            <person name="Fang L."/>
            <person name="Zhang Z."/>
            <person name="Zhang Y."/>
            <person name="Huang X."/>
            <person name="Su Z."/>
            <person name="Tong W."/>
            <person name="Li J."/>
            <person name="Tong Z."/>
            <person name="Li S."/>
            <person name="Ye J."/>
            <person name="Wang L."/>
            <person name="Fang L."/>
            <person name="Lei T."/>
            <person name="Chen C.-S."/>
            <person name="Chen H.-C."/>
            <person name="Xu Z."/>
            <person name="Li H."/>
            <person name="Huang H."/>
            <person name="Zhang F."/>
            <person name="Xu H."/>
            <person name="Li N."/>
            <person name="Zhao C."/>
            <person name="Li S."/>
            <person name="Dong L."/>
            <person name="Huang Y."/>
            <person name="Li L."/>
            <person name="Xi Y."/>
            <person name="Qi Q."/>
            <person name="Li W."/>
            <person name="Zhang B."/>
            <person name="Hu W."/>
            <person name="Zhang Y."/>
            <person name="Tian X."/>
            <person name="Jiao Y."/>
            <person name="Liang X."/>
            <person name="Jin J."/>
            <person name="Gao L."/>
            <person name="Zheng W."/>
            <person name="Hao B."/>
            <person name="Liu S.-M."/>
            <person name="Wang W."/>
            <person name="Yuan L."/>
            <person name="Cao M."/>
            <person name="McDermott J."/>
            <person name="Samudrala R."/>
            <person name="Wang J."/>
            <person name="Wong G.K.-S."/>
            <person name="Yang H."/>
        </authorList>
    </citation>
    <scope>NUCLEOTIDE SEQUENCE [LARGE SCALE GENOMIC DNA]</scope>
    <source>
        <strain>cv. Nipponbare</strain>
    </source>
</reference>
<reference key="7">
    <citation type="journal article" date="2004" name="Plant Mol. Biol.">
        <title>Nomenclature for members of the expansin superfamily of genes and proteins.</title>
        <authorList>
            <person name="Kende H."/>
            <person name="Bradford K.J."/>
            <person name="Brummell D.A."/>
            <person name="Cho H.-T."/>
            <person name="Cosgrove D.J."/>
            <person name="Fleming A.J."/>
            <person name="Gehring C."/>
            <person name="Lee Y."/>
            <person name="McQueen-Mason S.J."/>
            <person name="Rose J.K.C."/>
            <person name="Voesenek L.A.C."/>
        </authorList>
    </citation>
    <scope>NOMENCLATURE</scope>
</reference>
<gene>
    <name type="primary">EXPB15</name>
    <name type="ordered locus">Os04g0552000</name>
    <name type="ordered locus">LOC_Os04g46630</name>
    <name evidence="6" type="ORF">OsJ_15706</name>
    <name type="ORF">OSJNBa0010H02.7</name>
</gene>
<feature type="signal peptide" evidence="2">
    <location>
        <begin position="1"/>
        <end position="27"/>
    </location>
</feature>
<feature type="chain" id="PRO_0000252026" description="Expansin-B15">
    <location>
        <begin position="28"/>
        <end position="264"/>
    </location>
</feature>
<feature type="domain" description="Expansin-like EG45" evidence="4">
    <location>
        <begin position="55"/>
        <end position="165"/>
    </location>
</feature>
<feature type="domain" description="Expansin-like CBD" evidence="3">
    <location>
        <begin position="178"/>
        <end position="260"/>
    </location>
</feature>
<feature type="disulfide bond" evidence="4">
    <location>
        <begin position="58"/>
        <end position="87"/>
    </location>
</feature>
<feature type="disulfide bond" evidence="4">
    <location>
        <begin position="90"/>
        <end position="160"/>
    </location>
</feature>
<feature type="disulfide bond" evidence="4">
    <location>
        <begin position="95"/>
        <end position="101"/>
    </location>
</feature>
<accession>Q7XT40</accession>
<accession>A3AW74</accession>
<accession>Q0JB72</accession>
<accession>Q8LLM1</accession>
<evidence type="ECO:0000250" key="1"/>
<evidence type="ECO:0000255" key="2"/>
<evidence type="ECO:0000255" key="3">
    <source>
        <dbReference type="PROSITE-ProRule" id="PRU00078"/>
    </source>
</evidence>
<evidence type="ECO:0000255" key="4">
    <source>
        <dbReference type="PROSITE-ProRule" id="PRU00079"/>
    </source>
</evidence>
<evidence type="ECO:0000305" key="5"/>
<evidence type="ECO:0000312" key="6">
    <source>
        <dbReference type="EMBL" id="EAZ31563.1"/>
    </source>
</evidence>
<comment type="function">
    <text evidence="1">May cause loosening and extension of plant cell walls by disrupting non-covalent bonding between cellulose microfibrils and matrix glucans. No enzymatic activity has been found. May be required for rapid internodal elongation in deepwater rice during submergence (By similarity).</text>
</comment>
<comment type="subcellular location">
    <subcellularLocation>
        <location evidence="1">Secreted</location>
        <location evidence="1">Cell wall</location>
    </subcellularLocation>
    <subcellularLocation>
        <location evidence="1">Membrane</location>
        <topology evidence="1">Peripheral membrane protein</topology>
    </subcellularLocation>
</comment>
<comment type="similarity">
    <text evidence="5">Belongs to the expansin family. Expansin B subfamily.</text>
</comment>
<comment type="online information" name="EXPANSIN homepage">
    <link uri="https://www.dept.psu.edu/biology/groups/expansins/index.htm"/>
</comment>
<dbReference type="EMBL" id="AF391108">
    <property type="protein sequence ID" value="AAM73779.1"/>
    <property type="molecule type" value="Genomic_DNA"/>
</dbReference>
<dbReference type="EMBL" id="AL606633">
    <property type="protein sequence ID" value="CAE01687.2"/>
    <property type="molecule type" value="Genomic_DNA"/>
</dbReference>
<dbReference type="EMBL" id="AP008210">
    <property type="protein sequence ID" value="BAF15415.2"/>
    <property type="molecule type" value="Genomic_DNA"/>
</dbReference>
<dbReference type="EMBL" id="AP014960">
    <property type="protein sequence ID" value="BAS90388.1"/>
    <property type="molecule type" value="Genomic_DNA"/>
</dbReference>
<dbReference type="EMBL" id="CM000141">
    <property type="protein sequence ID" value="EAZ31563.1"/>
    <property type="molecule type" value="Genomic_DNA"/>
</dbReference>
<dbReference type="RefSeq" id="XP_015634512.1">
    <property type="nucleotide sequence ID" value="XM_015779026.1"/>
</dbReference>
<dbReference type="SMR" id="Q7XT40"/>
<dbReference type="FunCoup" id="Q7XT40">
    <property type="interactions" value="7"/>
</dbReference>
<dbReference type="STRING" id="39947.Q7XT40"/>
<dbReference type="PaxDb" id="39947-Q7XT40"/>
<dbReference type="EnsemblPlants" id="Os04t0552000-00">
    <property type="protein sequence ID" value="Os04t0552000-00"/>
    <property type="gene ID" value="Os04g0552000"/>
</dbReference>
<dbReference type="Gramene" id="Os04t0552000-00">
    <property type="protein sequence ID" value="Os04t0552000-00"/>
    <property type="gene ID" value="Os04g0552000"/>
</dbReference>
<dbReference type="KEGG" id="dosa:Os04g0552000"/>
<dbReference type="eggNOG" id="ENOG502QRTE">
    <property type="taxonomic scope" value="Eukaryota"/>
</dbReference>
<dbReference type="HOGENOM" id="CLU_027462_1_2_1"/>
<dbReference type="InParanoid" id="Q7XT40"/>
<dbReference type="OMA" id="WLLMQES"/>
<dbReference type="OrthoDB" id="406505at2759"/>
<dbReference type="Proteomes" id="UP000000763">
    <property type="component" value="Chromosome 4"/>
</dbReference>
<dbReference type="Proteomes" id="UP000007752">
    <property type="component" value="Chromosome 4"/>
</dbReference>
<dbReference type="Proteomes" id="UP000059680">
    <property type="component" value="Chromosome 4"/>
</dbReference>
<dbReference type="GO" id="GO:0005576">
    <property type="term" value="C:extracellular region"/>
    <property type="evidence" value="ECO:0007669"/>
    <property type="project" value="UniProtKB-KW"/>
</dbReference>
<dbReference type="GO" id="GO:0016020">
    <property type="term" value="C:membrane"/>
    <property type="evidence" value="ECO:0007669"/>
    <property type="project" value="UniProtKB-SubCell"/>
</dbReference>
<dbReference type="GO" id="GO:0009828">
    <property type="term" value="P:plant-type cell wall loosening"/>
    <property type="evidence" value="ECO:0000250"/>
    <property type="project" value="UniProtKB"/>
</dbReference>
<dbReference type="GO" id="GO:0019953">
    <property type="term" value="P:sexual reproduction"/>
    <property type="evidence" value="ECO:0007669"/>
    <property type="project" value="InterPro"/>
</dbReference>
<dbReference type="CDD" id="cd22275">
    <property type="entry name" value="DPBB_EXPB_N"/>
    <property type="match status" value="1"/>
</dbReference>
<dbReference type="Gene3D" id="2.60.40.760">
    <property type="entry name" value="Expansin, cellulose-binding-like domain"/>
    <property type="match status" value="1"/>
</dbReference>
<dbReference type="Gene3D" id="2.40.40.10">
    <property type="entry name" value="RlpA-like domain"/>
    <property type="match status" value="1"/>
</dbReference>
<dbReference type="InterPro" id="IPR007118">
    <property type="entry name" value="Expan_Lol_pI"/>
</dbReference>
<dbReference type="InterPro" id="IPR007112">
    <property type="entry name" value="Expansin/allergen_DPBB_dom"/>
</dbReference>
<dbReference type="InterPro" id="IPR007117">
    <property type="entry name" value="Expansin_CBD"/>
</dbReference>
<dbReference type="InterPro" id="IPR036749">
    <property type="entry name" value="Expansin_CBD_sf"/>
</dbReference>
<dbReference type="InterPro" id="IPR005795">
    <property type="entry name" value="LolPI"/>
</dbReference>
<dbReference type="InterPro" id="IPR009009">
    <property type="entry name" value="RlpA-like_DPBB"/>
</dbReference>
<dbReference type="InterPro" id="IPR036908">
    <property type="entry name" value="RlpA-like_sf"/>
</dbReference>
<dbReference type="PANTHER" id="PTHR31692:SF76">
    <property type="entry name" value="EXPANSIN-B15"/>
    <property type="match status" value="1"/>
</dbReference>
<dbReference type="PANTHER" id="PTHR31692">
    <property type="entry name" value="EXPANSIN-B3"/>
    <property type="match status" value="1"/>
</dbReference>
<dbReference type="Pfam" id="PF03330">
    <property type="entry name" value="DPBB_1"/>
    <property type="match status" value="1"/>
</dbReference>
<dbReference type="Pfam" id="PF01357">
    <property type="entry name" value="Expansin_C"/>
    <property type="match status" value="1"/>
</dbReference>
<dbReference type="PRINTS" id="PR01225">
    <property type="entry name" value="EXPANSNFAMLY"/>
</dbReference>
<dbReference type="PRINTS" id="PR00829">
    <property type="entry name" value="LOLP1ALLERGN"/>
</dbReference>
<dbReference type="SMART" id="SM00837">
    <property type="entry name" value="DPBB_1"/>
    <property type="match status" value="1"/>
</dbReference>
<dbReference type="SUPFAM" id="SSF50685">
    <property type="entry name" value="Barwin-like endoglucanases"/>
    <property type="match status" value="1"/>
</dbReference>
<dbReference type="SUPFAM" id="SSF49590">
    <property type="entry name" value="PHL pollen allergen"/>
    <property type="match status" value="1"/>
</dbReference>
<dbReference type="PROSITE" id="PS50843">
    <property type="entry name" value="EXPANSIN_CBD"/>
    <property type="match status" value="1"/>
</dbReference>
<dbReference type="PROSITE" id="PS50842">
    <property type="entry name" value="EXPANSIN_EG45"/>
    <property type="match status" value="1"/>
</dbReference>
<name>EXB15_ORYSJ</name>
<protein>
    <recommendedName>
        <fullName>Expansin-B15</fullName>
    </recommendedName>
    <alternativeName>
        <fullName>Beta-expansin-15</fullName>
    </alternativeName>
    <alternativeName>
        <fullName>OsEXPB15</fullName>
    </alternativeName>
    <alternativeName>
        <fullName>OsaEXPb1.16</fullName>
    </alternativeName>
</protein>